<dbReference type="EC" id="1.2.99.-"/>
<dbReference type="GO" id="GO:0016491">
    <property type="term" value="F:oxidoreductase activity"/>
    <property type="evidence" value="ECO:0007669"/>
    <property type="project" value="UniProtKB-KW"/>
</dbReference>
<accession>P80413</accession>
<reference key="1">
    <citation type="journal article" date="1996" name="Arch. Biochem. Biophys.">
        <title>A second molybdoprotein aldehyde dehydrogenase from Amycolatopsis methanolica NCIB 11946.</title>
        <authorList>
            <person name="Kim S.W."/>
            <person name="Luykx D.M.A.M."/>
            <person name="de Vries S."/>
            <person name="Duine J.A."/>
        </authorList>
    </citation>
    <scope>PROTEIN SEQUENCE</scope>
    <scope>FUNCTION</scope>
    <scope>COFACTOR</scope>
    <source>
        <strain>DSM 44096 / JCM 8087 / NBRC 15065 / NCIMB 11946 / NRRL B-24139 / LMD 80.32 / 239</strain>
    </source>
</reference>
<name>DLAA_AMYME</name>
<protein>
    <recommendedName>
        <fullName>DYE-linked aldehyde dehydrogenase, alpha chain</fullName>
        <shortName>DL-ALDH</shortName>
        <ecNumber>1.2.99.-</ecNumber>
    </recommendedName>
</protein>
<feature type="chain" id="PRO_0000079926" description="DYE-linked aldehyde dehydrogenase, alpha chain">
    <location>
        <begin position="1"/>
        <end position="24" status="greater than"/>
    </location>
</feature>
<feature type="non-terminal residue">
    <location>
        <position position="24"/>
    </location>
</feature>
<sequence>VGTRVVRIEDQQLITQGGTYVEDL</sequence>
<evidence type="ECO:0000269" key="1">
    <source>
    </source>
</evidence>
<comment type="function">
    <text evidence="1">Active with aldehydes and formate esters as substrates.</text>
</comment>
<comment type="cofactor">
    <cofactor evidence="1">
        <name>Mo-molybdopterin cytosine dinucleotide</name>
        <dbReference type="ChEBI" id="CHEBI:71308"/>
    </cofactor>
    <text evidence="1">Binds 1 Mo-molybdopterin cytosine dinucleotide (Mo-MCD) cofactor per subunit.</text>
</comment>
<comment type="subunit">
    <text>Heterotetramer composed of an alpha, a beta and two gamma chains.</text>
</comment>
<organism>
    <name type="scientific">Amycolatopsis methanolica</name>
    <dbReference type="NCBI Taxonomy" id="1814"/>
    <lineage>
        <taxon>Bacteria</taxon>
        <taxon>Bacillati</taxon>
        <taxon>Actinomycetota</taxon>
        <taxon>Actinomycetes</taxon>
        <taxon>Pseudonocardiales</taxon>
        <taxon>Pseudonocardiaceae</taxon>
        <taxon>Amycolatopsis</taxon>
        <taxon>Amycolatopsis methanolica group</taxon>
    </lineage>
</organism>
<keyword id="KW-0903">Direct protein sequencing</keyword>
<keyword id="KW-0500">Molybdenum</keyword>
<keyword id="KW-0560">Oxidoreductase</keyword>
<proteinExistence type="evidence at protein level"/>